<name>GCH1_RHOPB</name>
<accession>Q212N0</accession>
<organism>
    <name type="scientific">Rhodopseudomonas palustris (strain BisB18)</name>
    <dbReference type="NCBI Taxonomy" id="316056"/>
    <lineage>
        <taxon>Bacteria</taxon>
        <taxon>Pseudomonadati</taxon>
        <taxon>Pseudomonadota</taxon>
        <taxon>Alphaproteobacteria</taxon>
        <taxon>Hyphomicrobiales</taxon>
        <taxon>Nitrobacteraceae</taxon>
        <taxon>Rhodopseudomonas</taxon>
    </lineage>
</organism>
<comment type="catalytic activity">
    <reaction evidence="2">
        <text>GTP + H2O = 7,8-dihydroneopterin 3'-triphosphate + formate + H(+)</text>
        <dbReference type="Rhea" id="RHEA:17473"/>
        <dbReference type="ChEBI" id="CHEBI:15377"/>
        <dbReference type="ChEBI" id="CHEBI:15378"/>
        <dbReference type="ChEBI" id="CHEBI:15740"/>
        <dbReference type="ChEBI" id="CHEBI:37565"/>
        <dbReference type="ChEBI" id="CHEBI:58462"/>
        <dbReference type="EC" id="3.5.4.16"/>
    </reaction>
</comment>
<comment type="pathway">
    <text evidence="2">Cofactor biosynthesis; 7,8-dihydroneopterin triphosphate biosynthesis; 7,8-dihydroneopterin triphosphate from GTP: step 1/1.</text>
</comment>
<comment type="subunit">
    <text evidence="1">Toroid-shaped homodecamer, composed of two pentamers of five dimers.</text>
</comment>
<comment type="similarity">
    <text evidence="2">Belongs to the GTP cyclohydrolase I family.</text>
</comment>
<keyword id="KW-0342">GTP-binding</keyword>
<keyword id="KW-0378">Hydrolase</keyword>
<keyword id="KW-0479">Metal-binding</keyword>
<keyword id="KW-0547">Nucleotide-binding</keyword>
<keyword id="KW-0554">One-carbon metabolism</keyword>
<keyword id="KW-0862">Zinc</keyword>
<gene>
    <name evidence="2" type="primary">folE</name>
    <name type="ordered locus">RPC_3114</name>
</gene>
<reference key="1">
    <citation type="submission" date="2006-03" db="EMBL/GenBank/DDBJ databases">
        <title>Complete sequence of Rhodopseudomonas palustris BisB18.</title>
        <authorList>
            <consortium name="US DOE Joint Genome Institute"/>
            <person name="Copeland A."/>
            <person name="Lucas S."/>
            <person name="Lapidus A."/>
            <person name="Barry K."/>
            <person name="Detter J.C."/>
            <person name="Glavina del Rio T."/>
            <person name="Hammon N."/>
            <person name="Israni S."/>
            <person name="Dalin E."/>
            <person name="Tice H."/>
            <person name="Pitluck S."/>
            <person name="Chain P."/>
            <person name="Malfatti S."/>
            <person name="Shin M."/>
            <person name="Vergez L."/>
            <person name="Schmutz J."/>
            <person name="Larimer F."/>
            <person name="Land M."/>
            <person name="Hauser L."/>
            <person name="Pelletier D.A."/>
            <person name="Kyrpides N."/>
            <person name="Anderson I."/>
            <person name="Oda Y."/>
            <person name="Harwood C.S."/>
            <person name="Richardson P."/>
        </authorList>
    </citation>
    <scope>NUCLEOTIDE SEQUENCE [LARGE SCALE GENOMIC DNA]</scope>
    <source>
        <strain>BisB18</strain>
    </source>
</reference>
<feature type="chain" id="PRO_1000043721" description="GTP cyclohydrolase 1">
    <location>
        <begin position="1"/>
        <end position="234"/>
    </location>
</feature>
<feature type="region of interest" description="Disordered" evidence="3">
    <location>
        <begin position="1"/>
        <end position="26"/>
    </location>
</feature>
<feature type="compositionally biased region" description="Basic and acidic residues" evidence="3">
    <location>
        <begin position="11"/>
        <end position="26"/>
    </location>
</feature>
<feature type="binding site" evidence="2">
    <location>
        <position position="123"/>
    </location>
    <ligand>
        <name>Zn(2+)</name>
        <dbReference type="ChEBI" id="CHEBI:29105"/>
    </ligand>
</feature>
<feature type="binding site" evidence="2">
    <location>
        <position position="126"/>
    </location>
    <ligand>
        <name>Zn(2+)</name>
        <dbReference type="ChEBI" id="CHEBI:29105"/>
    </ligand>
</feature>
<feature type="binding site" evidence="2">
    <location>
        <position position="194"/>
    </location>
    <ligand>
        <name>Zn(2+)</name>
        <dbReference type="ChEBI" id="CHEBI:29105"/>
    </ligand>
</feature>
<dbReference type="EC" id="3.5.4.16" evidence="2"/>
<dbReference type="EMBL" id="CP000301">
    <property type="protein sequence ID" value="ABD88656.1"/>
    <property type="molecule type" value="Genomic_DNA"/>
</dbReference>
<dbReference type="SMR" id="Q212N0"/>
<dbReference type="STRING" id="316056.RPC_3114"/>
<dbReference type="KEGG" id="rpc:RPC_3114"/>
<dbReference type="eggNOG" id="COG0302">
    <property type="taxonomic scope" value="Bacteria"/>
</dbReference>
<dbReference type="HOGENOM" id="CLU_049768_3_1_5"/>
<dbReference type="OrthoDB" id="9801207at2"/>
<dbReference type="UniPathway" id="UPA00848">
    <property type="reaction ID" value="UER00151"/>
</dbReference>
<dbReference type="GO" id="GO:0005737">
    <property type="term" value="C:cytoplasm"/>
    <property type="evidence" value="ECO:0007669"/>
    <property type="project" value="TreeGrafter"/>
</dbReference>
<dbReference type="GO" id="GO:0005525">
    <property type="term" value="F:GTP binding"/>
    <property type="evidence" value="ECO:0007669"/>
    <property type="project" value="UniProtKB-KW"/>
</dbReference>
<dbReference type="GO" id="GO:0003934">
    <property type="term" value="F:GTP cyclohydrolase I activity"/>
    <property type="evidence" value="ECO:0007669"/>
    <property type="project" value="UniProtKB-UniRule"/>
</dbReference>
<dbReference type="GO" id="GO:0008270">
    <property type="term" value="F:zinc ion binding"/>
    <property type="evidence" value="ECO:0007669"/>
    <property type="project" value="UniProtKB-UniRule"/>
</dbReference>
<dbReference type="GO" id="GO:0006730">
    <property type="term" value="P:one-carbon metabolic process"/>
    <property type="evidence" value="ECO:0007669"/>
    <property type="project" value="UniProtKB-UniRule"/>
</dbReference>
<dbReference type="GO" id="GO:0006729">
    <property type="term" value="P:tetrahydrobiopterin biosynthetic process"/>
    <property type="evidence" value="ECO:0007669"/>
    <property type="project" value="TreeGrafter"/>
</dbReference>
<dbReference type="GO" id="GO:0046654">
    <property type="term" value="P:tetrahydrofolate biosynthetic process"/>
    <property type="evidence" value="ECO:0007669"/>
    <property type="project" value="UniProtKB-UniRule"/>
</dbReference>
<dbReference type="FunFam" id="1.10.286.10:FF:000001">
    <property type="entry name" value="GTP cyclohydrolase 1"/>
    <property type="match status" value="1"/>
</dbReference>
<dbReference type="FunFam" id="3.30.1130.10:FF:000001">
    <property type="entry name" value="GTP cyclohydrolase 1"/>
    <property type="match status" value="1"/>
</dbReference>
<dbReference type="Gene3D" id="1.10.286.10">
    <property type="match status" value="1"/>
</dbReference>
<dbReference type="Gene3D" id="3.30.1130.10">
    <property type="match status" value="1"/>
</dbReference>
<dbReference type="HAMAP" id="MF_00223">
    <property type="entry name" value="FolE"/>
    <property type="match status" value="1"/>
</dbReference>
<dbReference type="InterPro" id="IPR043133">
    <property type="entry name" value="GTP-CH-I_C/QueF"/>
</dbReference>
<dbReference type="InterPro" id="IPR043134">
    <property type="entry name" value="GTP-CH-I_N"/>
</dbReference>
<dbReference type="InterPro" id="IPR001474">
    <property type="entry name" value="GTP_CycHdrlase_I"/>
</dbReference>
<dbReference type="InterPro" id="IPR018234">
    <property type="entry name" value="GTP_CycHdrlase_I_CS"/>
</dbReference>
<dbReference type="InterPro" id="IPR020602">
    <property type="entry name" value="GTP_CycHdrlase_I_dom"/>
</dbReference>
<dbReference type="NCBIfam" id="TIGR00063">
    <property type="entry name" value="folE"/>
    <property type="match status" value="1"/>
</dbReference>
<dbReference type="NCBIfam" id="NF006825">
    <property type="entry name" value="PRK09347.1-2"/>
    <property type="match status" value="1"/>
</dbReference>
<dbReference type="NCBIfam" id="NF006826">
    <property type="entry name" value="PRK09347.1-3"/>
    <property type="match status" value="1"/>
</dbReference>
<dbReference type="PANTHER" id="PTHR11109:SF7">
    <property type="entry name" value="GTP CYCLOHYDROLASE 1"/>
    <property type="match status" value="1"/>
</dbReference>
<dbReference type="PANTHER" id="PTHR11109">
    <property type="entry name" value="GTP CYCLOHYDROLASE I"/>
    <property type="match status" value="1"/>
</dbReference>
<dbReference type="Pfam" id="PF01227">
    <property type="entry name" value="GTP_cyclohydroI"/>
    <property type="match status" value="1"/>
</dbReference>
<dbReference type="SUPFAM" id="SSF55620">
    <property type="entry name" value="Tetrahydrobiopterin biosynthesis enzymes-like"/>
    <property type="match status" value="1"/>
</dbReference>
<dbReference type="PROSITE" id="PS00859">
    <property type="entry name" value="GTP_CYCLOHYDROL_1_1"/>
    <property type="match status" value="1"/>
</dbReference>
<protein>
    <recommendedName>
        <fullName evidence="2">GTP cyclohydrolase 1</fullName>
        <ecNumber evidence="2">3.5.4.16</ecNumber>
    </recommendedName>
    <alternativeName>
        <fullName evidence="2">GTP cyclohydrolase I</fullName>
        <shortName evidence="2">GTP-CH-I</shortName>
    </alternativeName>
</protein>
<sequence length="234" mass="25940">MDALIKPLRAGKPDAKPADPKGTEFRPAELDPAEFLAAAVKPDQPRPSRGEAEQAVKTLLAYIGEDTAREGLLDTPRRVVEAYDELFQGYHQCPAEVLNRTFGETAGYDDFVLIRDMSFTSHCEHHVMPFYGKAHIAYTPVERVVGLSKLARLVDIFAHRLQTQEHLTAQIAAAVDEVLKPRGVAVMIEAEHTCMSVRGIAKQGAVTFTSRFTGMFRDNPAEQARFMSMIRGGR</sequence>
<evidence type="ECO:0000250" key="1"/>
<evidence type="ECO:0000255" key="2">
    <source>
        <dbReference type="HAMAP-Rule" id="MF_00223"/>
    </source>
</evidence>
<evidence type="ECO:0000256" key="3">
    <source>
        <dbReference type="SAM" id="MobiDB-lite"/>
    </source>
</evidence>
<proteinExistence type="inferred from homology"/>